<comment type="function">
    <text>The primary product of this enzyme is 4,2',4',6'-tetrahydroxychalcone (also termed naringenin-chalcone or chalcone) which can under specific conditions spontaneously isomerize into naringenin.</text>
</comment>
<comment type="catalytic activity">
    <reaction evidence="1">
        <text>(E)-4-coumaroyl-CoA + 3 malonyl-CoA + 3 H(+) = 2',4,4',6'-tetrahydroxychalcone + 3 CO2 + 4 CoA</text>
        <dbReference type="Rhea" id="RHEA:11128"/>
        <dbReference type="ChEBI" id="CHEBI:15378"/>
        <dbReference type="ChEBI" id="CHEBI:15413"/>
        <dbReference type="ChEBI" id="CHEBI:16526"/>
        <dbReference type="ChEBI" id="CHEBI:57287"/>
        <dbReference type="ChEBI" id="CHEBI:57384"/>
        <dbReference type="ChEBI" id="CHEBI:85008"/>
        <dbReference type="EC" id="2.3.1.74"/>
    </reaction>
</comment>
<comment type="pathway">
    <text>Secondary metabolite biosynthesis; flavonoid biosynthesis.</text>
</comment>
<comment type="similarity">
    <text evidence="2">Belongs to the thiolase-like superfamily. Chalcone/stilbene synthases family.</text>
</comment>
<organism>
    <name type="scientific">Secale cereale</name>
    <name type="common">Rye</name>
    <dbReference type="NCBI Taxonomy" id="4550"/>
    <lineage>
        <taxon>Eukaryota</taxon>
        <taxon>Viridiplantae</taxon>
        <taxon>Streptophyta</taxon>
        <taxon>Embryophyta</taxon>
        <taxon>Tracheophyta</taxon>
        <taxon>Spermatophyta</taxon>
        <taxon>Magnoliopsida</taxon>
        <taxon>Liliopsida</taxon>
        <taxon>Poales</taxon>
        <taxon>Poaceae</taxon>
        <taxon>BOP clade</taxon>
        <taxon>Pooideae</taxon>
        <taxon>Triticodae</taxon>
        <taxon>Triticeae</taxon>
        <taxon>Hordeinae</taxon>
        <taxon>Secale</taxon>
    </lineage>
</organism>
<sequence>MAATMTVEEVRKAQRAEGPATVLAIGTATPANCVYQADYPDYYFKITKSDHMADLKEKFKRMCDKSQIRKRYMHLTEEILQDNPNMCAYMAPSLDARQDIVVVEVPKLGKAAAQKAIKEWGQPRSKITHLVFCTTSGVDMPGADYQLTKMLGLRPSVKRLMMYQQGCFAGGTVLRLAKDLAENNRGARVLVVCSEITAVTFRGPHEFDSLVGQALFGDGAAAVIVGADPDESVERPLFQLVSASQTILPDSEGAIDGHLREVGLTFHLLKDVPGLISKNIERALEDAFKPLGIDDWNSVFWIAHPGGPAILDMVEAKVNLNKERMRATRHVLSEYGNMSSACVLFIMDEMRKRSAEDGHTTTGEGMDWGVLFGFGPGLTVETVVLHSVPVTA</sequence>
<evidence type="ECO:0000255" key="1">
    <source>
        <dbReference type="PROSITE-ProRule" id="PRU10023"/>
    </source>
</evidence>
<evidence type="ECO:0000305" key="2"/>
<feature type="chain" id="PRO_0000216048" description="Chalcone synthase 1">
    <location>
        <begin position="1"/>
        <end position="392"/>
    </location>
</feature>
<feature type="active site" evidence="1">
    <location>
        <position position="167"/>
    </location>
</feature>
<protein>
    <recommendedName>
        <fullName>Chalcone synthase 1</fullName>
        <ecNumber>2.3.1.74</ecNumber>
    </recommendedName>
    <alternativeName>
        <fullName>Naringenin-chalcone synthase 1</fullName>
    </alternativeName>
</protein>
<proteinExistence type="inferred from homology"/>
<reference key="1">
    <citation type="journal article" date="1996" name="Bot. Acta">
        <title>Expression of chalcone synthase genes in coleoptiles and primary leaves of Secale cereale L. after induction by UV radiation: evidence for a UV-protective role of the coleoptile.</title>
        <authorList>
            <person name="Haussuehl K.K."/>
            <person name="Rohde W."/>
            <person name="Weissenboeck G."/>
        </authorList>
    </citation>
    <scope>NUCLEOTIDE SEQUENCE [GENOMIC DNA]</scope>
    <source>
        <strain>cv. Kustro</strain>
    </source>
</reference>
<keyword id="KW-0012">Acyltransferase</keyword>
<keyword id="KW-0284">Flavonoid biosynthesis</keyword>
<keyword id="KW-0808">Transferase</keyword>
<name>CHS1_SECCE</name>
<gene>
    <name type="primary">CHS1</name>
</gene>
<dbReference type="EC" id="2.3.1.74"/>
<dbReference type="EMBL" id="X92548">
    <property type="protein sequence ID" value="CAA63306.1"/>
    <property type="molecule type" value="Genomic_DNA"/>
</dbReference>
<dbReference type="SMR" id="P53414"/>
<dbReference type="UniPathway" id="UPA00154"/>
<dbReference type="GO" id="GO:0016210">
    <property type="term" value="F:naringenin-chalcone synthase activity"/>
    <property type="evidence" value="ECO:0007669"/>
    <property type="project" value="UniProtKB-EC"/>
</dbReference>
<dbReference type="GO" id="GO:0009813">
    <property type="term" value="P:flavonoid biosynthetic process"/>
    <property type="evidence" value="ECO:0007669"/>
    <property type="project" value="UniProtKB-UniPathway"/>
</dbReference>
<dbReference type="GO" id="GO:0030639">
    <property type="term" value="P:polyketide biosynthetic process"/>
    <property type="evidence" value="ECO:0007669"/>
    <property type="project" value="TreeGrafter"/>
</dbReference>
<dbReference type="CDD" id="cd00831">
    <property type="entry name" value="CHS_like"/>
    <property type="match status" value="1"/>
</dbReference>
<dbReference type="FunFam" id="3.40.47.10:FF:000014">
    <property type="entry name" value="Chalcone synthase 1"/>
    <property type="match status" value="1"/>
</dbReference>
<dbReference type="FunFam" id="3.40.47.10:FF:000025">
    <property type="entry name" value="Chalcone synthase 2"/>
    <property type="match status" value="1"/>
</dbReference>
<dbReference type="Gene3D" id="3.40.47.10">
    <property type="match status" value="2"/>
</dbReference>
<dbReference type="InterPro" id="IPR012328">
    <property type="entry name" value="Chalcone/stilbene_synt_C"/>
</dbReference>
<dbReference type="InterPro" id="IPR001099">
    <property type="entry name" value="Chalcone/stilbene_synt_N"/>
</dbReference>
<dbReference type="InterPro" id="IPR018088">
    <property type="entry name" value="Chalcone/stilbene_synthase_AS"/>
</dbReference>
<dbReference type="InterPro" id="IPR011141">
    <property type="entry name" value="Polyketide_synthase_type-III"/>
</dbReference>
<dbReference type="InterPro" id="IPR016039">
    <property type="entry name" value="Thiolase-like"/>
</dbReference>
<dbReference type="PANTHER" id="PTHR11877:SF14">
    <property type="entry name" value="CHALCONE SYNTHASE"/>
    <property type="match status" value="1"/>
</dbReference>
<dbReference type="PANTHER" id="PTHR11877">
    <property type="entry name" value="HYDROXYMETHYLGLUTARYL-COA SYNTHASE"/>
    <property type="match status" value="1"/>
</dbReference>
<dbReference type="Pfam" id="PF02797">
    <property type="entry name" value="Chal_sti_synt_C"/>
    <property type="match status" value="1"/>
</dbReference>
<dbReference type="Pfam" id="PF00195">
    <property type="entry name" value="Chal_sti_synt_N"/>
    <property type="match status" value="1"/>
</dbReference>
<dbReference type="PIRSF" id="PIRSF000451">
    <property type="entry name" value="PKS_III"/>
    <property type="match status" value="1"/>
</dbReference>
<dbReference type="SUPFAM" id="SSF53901">
    <property type="entry name" value="Thiolase-like"/>
    <property type="match status" value="2"/>
</dbReference>
<dbReference type="PROSITE" id="PS00441">
    <property type="entry name" value="CHALCONE_SYNTH"/>
    <property type="match status" value="1"/>
</dbReference>
<accession>P53414</accession>